<sequence length="447" mass="49670">MREIVHLQTGQCGNQIGAAFWQTIAGEHGLDGSGHYTGSSDLQLERMNVYFNEASSKKYVPRAVLVDLEPAALDAVRAGPFGQLFRPDNVVFGQSGAGNNWAKGHYTEGANLVDQVIDVVRREAEGCDCLQGFQITHSLGGGTGAGMGTLLISKIREEFPAGMMATFSVVPSPMVSDTVVEPYNATLSIHQLVEHSDETFCIDNEALYNICMRTLKLTNPSYGDLNHLVSAVMSGVSTSLRFPGQLNSDLRKLAVNMVPFPRLHFFMVGFAPLTSRNAYSFRAVSVPELTQQMFDPKNMMAATDFRSGRYLTCSAIFRGKVSMKEVEDQMRNIQNKNSAYFVEWIPNNVQTALCSIPPRGLQMSSTFVGNSTSIQELFKRVGDQFTAMFRKKAFLFWYTGEGMDEMEFTEAENNMNDLVSEYQQYQDASVSDGEEEYLEDEQLEGEE</sequence>
<reference key="1">
    <citation type="submission" date="2004-09" db="EMBL/GenBank/DDBJ databases">
        <title>Molecular characterization of beta-tubulin gene from dermatophyte pathogen Trichophyton rubrum.</title>
        <authorList>
            <person name="Zomorodian K."/>
            <person name="Tarazooie B."/>
            <person name="Kordbacheh P."/>
            <person name="Rezaian M."/>
            <person name="Korramizadeh M.R."/>
            <person name="Rezaie S."/>
        </authorList>
    </citation>
    <scope>NUCLEOTIDE SEQUENCE [MRNA]</scope>
</reference>
<evidence type="ECO:0000250" key="1">
    <source>
        <dbReference type="UniProtKB" id="P68363"/>
    </source>
</evidence>
<evidence type="ECO:0000250" key="2">
    <source>
        <dbReference type="UniProtKB" id="Q13509"/>
    </source>
</evidence>
<evidence type="ECO:0000305" key="3"/>
<name>TBB_TRIRU</name>
<accession>Q5UBX3</accession>
<proteinExistence type="evidence at transcript level"/>
<feature type="chain" id="PRO_0000048433" description="Tubulin beta chain">
    <location>
        <begin position="1"/>
        <end position="447"/>
    </location>
</feature>
<feature type="binding site" evidence="2">
    <location>
        <position position="11"/>
    </location>
    <ligand>
        <name>GTP</name>
        <dbReference type="ChEBI" id="CHEBI:37565"/>
    </ligand>
</feature>
<feature type="binding site" evidence="1">
    <location>
        <position position="69"/>
    </location>
    <ligand>
        <name>GTP</name>
        <dbReference type="ChEBI" id="CHEBI:37565"/>
    </ligand>
</feature>
<feature type="binding site" evidence="1">
    <location>
        <position position="69"/>
    </location>
    <ligand>
        <name>Mg(2+)</name>
        <dbReference type="ChEBI" id="CHEBI:18420"/>
    </ligand>
</feature>
<feature type="binding site" evidence="2">
    <location>
        <position position="138"/>
    </location>
    <ligand>
        <name>GTP</name>
        <dbReference type="ChEBI" id="CHEBI:37565"/>
    </ligand>
</feature>
<feature type="binding site" evidence="2">
    <location>
        <position position="142"/>
    </location>
    <ligand>
        <name>GTP</name>
        <dbReference type="ChEBI" id="CHEBI:37565"/>
    </ligand>
</feature>
<feature type="binding site" evidence="2">
    <location>
        <position position="143"/>
    </location>
    <ligand>
        <name>GTP</name>
        <dbReference type="ChEBI" id="CHEBI:37565"/>
    </ligand>
</feature>
<feature type="binding site" evidence="2">
    <location>
        <position position="144"/>
    </location>
    <ligand>
        <name>GTP</name>
        <dbReference type="ChEBI" id="CHEBI:37565"/>
    </ligand>
</feature>
<feature type="binding site" evidence="2">
    <location>
        <position position="204"/>
    </location>
    <ligand>
        <name>GTP</name>
        <dbReference type="ChEBI" id="CHEBI:37565"/>
    </ligand>
</feature>
<feature type="binding site" evidence="2">
    <location>
        <position position="226"/>
    </location>
    <ligand>
        <name>GTP</name>
        <dbReference type="ChEBI" id="CHEBI:37565"/>
    </ligand>
</feature>
<comment type="function">
    <text>Tubulin is the major constituent of microtubules, a cylinder consisting of laterally associated linear protofilaments composed of alpha- and beta-tubulin heterodimers. Microtubules grow by the addition of GTP-tubulin dimers to the microtubule end, where a stabilizing cap forms. Below the cap, tubulin dimers are in GDP-bound state, owing to GTPase activity of alpha-tubulin.</text>
</comment>
<comment type="cofactor">
    <cofactor evidence="1">
        <name>Mg(2+)</name>
        <dbReference type="ChEBI" id="CHEBI:18420"/>
    </cofactor>
</comment>
<comment type="subunit">
    <text>Dimer of alpha and beta chains. A typical microtubule is a hollow water-filled tube with an outer diameter of 25 nm and an inner diameter of 15 nM. Alpha-beta heterodimers associate head-to-tail to form protofilaments running lengthwise along the microtubule wall with the beta-tubulin subunit facing the microtubule plus end conferring a structural polarity. Microtubules usually have 13 protofilaments but different protofilament numbers can be found in some organisms and specialized cells.</text>
</comment>
<comment type="subcellular location">
    <subcellularLocation>
        <location>Cytoplasm</location>
        <location>Cytoskeleton</location>
    </subcellularLocation>
</comment>
<comment type="similarity">
    <text evidence="3">Belongs to the tubulin family.</text>
</comment>
<keyword id="KW-0963">Cytoplasm</keyword>
<keyword id="KW-0206">Cytoskeleton</keyword>
<keyword id="KW-0342">GTP-binding</keyword>
<keyword id="KW-0460">Magnesium</keyword>
<keyword id="KW-0479">Metal-binding</keyword>
<keyword id="KW-0493">Microtubule</keyword>
<keyword id="KW-0547">Nucleotide-binding</keyword>
<protein>
    <recommendedName>
        <fullName>Tubulin beta chain</fullName>
    </recommendedName>
    <alternativeName>
        <fullName>Beta-tubulin</fullName>
    </alternativeName>
</protein>
<organism>
    <name type="scientific">Trichophyton rubrum</name>
    <name type="common">Athlete's foot fungus</name>
    <name type="synonym">Epidermophyton rubrum</name>
    <dbReference type="NCBI Taxonomy" id="5551"/>
    <lineage>
        <taxon>Eukaryota</taxon>
        <taxon>Fungi</taxon>
        <taxon>Dikarya</taxon>
        <taxon>Ascomycota</taxon>
        <taxon>Pezizomycotina</taxon>
        <taxon>Eurotiomycetes</taxon>
        <taxon>Eurotiomycetidae</taxon>
        <taxon>Onygenales</taxon>
        <taxon>Arthrodermataceae</taxon>
        <taxon>Trichophyton</taxon>
    </lineage>
</organism>
<dbReference type="EMBL" id="AY763789">
    <property type="protein sequence ID" value="AAV33733.1"/>
    <property type="molecule type" value="mRNA"/>
</dbReference>
<dbReference type="SMR" id="Q5UBX3"/>
<dbReference type="DrugBank" id="DB00400">
    <property type="generic name" value="Griseofulvin"/>
</dbReference>
<dbReference type="VEuPathDB" id="FungiDB:TERG_07904"/>
<dbReference type="GO" id="GO:0005737">
    <property type="term" value="C:cytoplasm"/>
    <property type="evidence" value="ECO:0007669"/>
    <property type="project" value="UniProtKB-KW"/>
</dbReference>
<dbReference type="GO" id="GO:0005874">
    <property type="term" value="C:microtubule"/>
    <property type="evidence" value="ECO:0007669"/>
    <property type="project" value="UniProtKB-KW"/>
</dbReference>
<dbReference type="GO" id="GO:0005525">
    <property type="term" value="F:GTP binding"/>
    <property type="evidence" value="ECO:0007669"/>
    <property type="project" value="UniProtKB-KW"/>
</dbReference>
<dbReference type="GO" id="GO:0003924">
    <property type="term" value="F:GTPase activity"/>
    <property type="evidence" value="ECO:0007669"/>
    <property type="project" value="InterPro"/>
</dbReference>
<dbReference type="GO" id="GO:0046872">
    <property type="term" value="F:metal ion binding"/>
    <property type="evidence" value="ECO:0007669"/>
    <property type="project" value="UniProtKB-KW"/>
</dbReference>
<dbReference type="GO" id="GO:0005200">
    <property type="term" value="F:structural constituent of cytoskeleton"/>
    <property type="evidence" value="ECO:0007669"/>
    <property type="project" value="InterPro"/>
</dbReference>
<dbReference type="GO" id="GO:0007017">
    <property type="term" value="P:microtubule-based process"/>
    <property type="evidence" value="ECO:0007669"/>
    <property type="project" value="InterPro"/>
</dbReference>
<dbReference type="CDD" id="cd02187">
    <property type="entry name" value="beta_tubulin"/>
    <property type="match status" value="1"/>
</dbReference>
<dbReference type="FunFam" id="1.10.287.600:FF:000002">
    <property type="entry name" value="Tubulin beta chain"/>
    <property type="match status" value="1"/>
</dbReference>
<dbReference type="FunFam" id="3.30.1330.20:FF:000002">
    <property type="entry name" value="Tubulin beta chain"/>
    <property type="match status" value="1"/>
</dbReference>
<dbReference type="FunFam" id="3.40.50.1440:FF:000009">
    <property type="entry name" value="Tubulin beta chain"/>
    <property type="match status" value="1"/>
</dbReference>
<dbReference type="Gene3D" id="1.10.287.600">
    <property type="entry name" value="Helix hairpin bin"/>
    <property type="match status" value="1"/>
</dbReference>
<dbReference type="Gene3D" id="3.30.1330.20">
    <property type="entry name" value="Tubulin/FtsZ, C-terminal domain"/>
    <property type="match status" value="1"/>
</dbReference>
<dbReference type="Gene3D" id="3.40.50.1440">
    <property type="entry name" value="Tubulin/FtsZ, GTPase domain"/>
    <property type="match status" value="1"/>
</dbReference>
<dbReference type="InterPro" id="IPR013838">
    <property type="entry name" value="Beta-tubulin_BS"/>
</dbReference>
<dbReference type="InterPro" id="IPR002453">
    <property type="entry name" value="Beta_tubulin"/>
</dbReference>
<dbReference type="InterPro" id="IPR008280">
    <property type="entry name" value="Tub_FtsZ_C"/>
</dbReference>
<dbReference type="InterPro" id="IPR000217">
    <property type="entry name" value="Tubulin"/>
</dbReference>
<dbReference type="InterPro" id="IPR037103">
    <property type="entry name" value="Tubulin/FtsZ-like_C"/>
</dbReference>
<dbReference type="InterPro" id="IPR018316">
    <property type="entry name" value="Tubulin/FtsZ_2-layer-sand-dom"/>
</dbReference>
<dbReference type="InterPro" id="IPR036525">
    <property type="entry name" value="Tubulin/FtsZ_GTPase_sf"/>
</dbReference>
<dbReference type="InterPro" id="IPR023123">
    <property type="entry name" value="Tubulin_C"/>
</dbReference>
<dbReference type="InterPro" id="IPR017975">
    <property type="entry name" value="Tubulin_CS"/>
</dbReference>
<dbReference type="InterPro" id="IPR003008">
    <property type="entry name" value="Tubulin_FtsZ_GTPase"/>
</dbReference>
<dbReference type="PANTHER" id="PTHR11588">
    <property type="entry name" value="TUBULIN"/>
    <property type="match status" value="1"/>
</dbReference>
<dbReference type="Pfam" id="PF00091">
    <property type="entry name" value="Tubulin"/>
    <property type="match status" value="1"/>
</dbReference>
<dbReference type="Pfam" id="PF03953">
    <property type="entry name" value="Tubulin_C"/>
    <property type="match status" value="1"/>
</dbReference>
<dbReference type="PRINTS" id="PR01163">
    <property type="entry name" value="BETATUBULIN"/>
</dbReference>
<dbReference type="PRINTS" id="PR01161">
    <property type="entry name" value="TUBULIN"/>
</dbReference>
<dbReference type="SMART" id="SM00864">
    <property type="entry name" value="Tubulin"/>
    <property type="match status" value="1"/>
</dbReference>
<dbReference type="SMART" id="SM00865">
    <property type="entry name" value="Tubulin_C"/>
    <property type="match status" value="1"/>
</dbReference>
<dbReference type="SUPFAM" id="SSF55307">
    <property type="entry name" value="Tubulin C-terminal domain-like"/>
    <property type="match status" value="1"/>
</dbReference>
<dbReference type="SUPFAM" id="SSF52490">
    <property type="entry name" value="Tubulin nucleotide-binding domain-like"/>
    <property type="match status" value="1"/>
</dbReference>
<dbReference type="PROSITE" id="PS00227">
    <property type="entry name" value="TUBULIN"/>
    <property type="match status" value="1"/>
</dbReference>
<dbReference type="PROSITE" id="PS00228">
    <property type="entry name" value="TUBULIN_B_AUTOREG"/>
    <property type="match status" value="1"/>
</dbReference>